<gene>
    <name evidence="1" type="primary">rdgC</name>
    <name type="ordered locus">Sputcn32_1294</name>
</gene>
<accession>A4Y4Y9</accession>
<feature type="chain" id="PRO_1000021233" description="Recombination-associated protein RdgC">
    <location>
        <begin position="1"/>
        <end position="304"/>
    </location>
</feature>
<dbReference type="EMBL" id="CP000681">
    <property type="protein sequence ID" value="ABP75022.1"/>
    <property type="molecule type" value="Genomic_DNA"/>
</dbReference>
<dbReference type="SMR" id="A4Y4Y9"/>
<dbReference type="STRING" id="319224.Sputcn32_1294"/>
<dbReference type="KEGG" id="spc:Sputcn32_1294"/>
<dbReference type="eggNOG" id="COG2974">
    <property type="taxonomic scope" value="Bacteria"/>
</dbReference>
<dbReference type="HOGENOM" id="CLU_052038_1_1_6"/>
<dbReference type="GO" id="GO:0043590">
    <property type="term" value="C:bacterial nucleoid"/>
    <property type="evidence" value="ECO:0007669"/>
    <property type="project" value="TreeGrafter"/>
</dbReference>
<dbReference type="GO" id="GO:0005737">
    <property type="term" value="C:cytoplasm"/>
    <property type="evidence" value="ECO:0007669"/>
    <property type="project" value="UniProtKB-UniRule"/>
</dbReference>
<dbReference type="GO" id="GO:0003690">
    <property type="term" value="F:double-stranded DNA binding"/>
    <property type="evidence" value="ECO:0007669"/>
    <property type="project" value="TreeGrafter"/>
</dbReference>
<dbReference type="GO" id="GO:0006310">
    <property type="term" value="P:DNA recombination"/>
    <property type="evidence" value="ECO:0007669"/>
    <property type="project" value="UniProtKB-UniRule"/>
</dbReference>
<dbReference type="GO" id="GO:0000018">
    <property type="term" value="P:regulation of DNA recombination"/>
    <property type="evidence" value="ECO:0007669"/>
    <property type="project" value="TreeGrafter"/>
</dbReference>
<dbReference type="HAMAP" id="MF_00194">
    <property type="entry name" value="RdgC"/>
    <property type="match status" value="1"/>
</dbReference>
<dbReference type="InterPro" id="IPR007476">
    <property type="entry name" value="RdgC"/>
</dbReference>
<dbReference type="NCBIfam" id="NF001462">
    <property type="entry name" value="PRK00321.1-3"/>
    <property type="match status" value="1"/>
</dbReference>
<dbReference type="NCBIfam" id="NF001464">
    <property type="entry name" value="PRK00321.1-5"/>
    <property type="match status" value="1"/>
</dbReference>
<dbReference type="PANTHER" id="PTHR38103">
    <property type="entry name" value="RECOMBINATION-ASSOCIATED PROTEIN RDGC"/>
    <property type="match status" value="1"/>
</dbReference>
<dbReference type="PANTHER" id="PTHR38103:SF1">
    <property type="entry name" value="RECOMBINATION-ASSOCIATED PROTEIN RDGC"/>
    <property type="match status" value="1"/>
</dbReference>
<dbReference type="Pfam" id="PF04381">
    <property type="entry name" value="RdgC"/>
    <property type="match status" value="1"/>
</dbReference>
<name>RDGC_SHEPC</name>
<comment type="function">
    <text evidence="1">May be involved in recombination.</text>
</comment>
<comment type="subcellular location">
    <subcellularLocation>
        <location evidence="1">Cytoplasm</location>
        <location evidence="1">Nucleoid</location>
    </subcellularLocation>
</comment>
<comment type="similarity">
    <text evidence="1">Belongs to the RdgC family.</text>
</comment>
<keyword id="KW-0963">Cytoplasm</keyword>
<keyword id="KW-0233">DNA recombination</keyword>
<proteinExistence type="inferred from homology"/>
<reference key="1">
    <citation type="submission" date="2007-04" db="EMBL/GenBank/DDBJ databases">
        <title>Complete sequence of Shewanella putrefaciens CN-32.</title>
        <authorList>
            <consortium name="US DOE Joint Genome Institute"/>
            <person name="Copeland A."/>
            <person name="Lucas S."/>
            <person name="Lapidus A."/>
            <person name="Barry K."/>
            <person name="Detter J.C."/>
            <person name="Glavina del Rio T."/>
            <person name="Hammon N."/>
            <person name="Israni S."/>
            <person name="Dalin E."/>
            <person name="Tice H."/>
            <person name="Pitluck S."/>
            <person name="Chain P."/>
            <person name="Malfatti S."/>
            <person name="Shin M."/>
            <person name="Vergez L."/>
            <person name="Schmutz J."/>
            <person name="Larimer F."/>
            <person name="Land M."/>
            <person name="Hauser L."/>
            <person name="Kyrpides N."/>
            <person name="Mikhailova N."/>
            <person name="Romine M.F."/>
            <person name="Fredrickson J."/>
            <person name="Tiedje J."/>
            <person name="Richardson P."/>
        </authorList>
    </citation>
    <scope>NUCLEOTIDE SEQUENCE [LARGE SCALE GENOMIC DNA]</scope>
    <source>
        <strain>CN-32 / ATCC BAA-453</strain>
    </source>
</reference>
<organism>
    <name type="scientific">Shewanella putrefaciens (strain CN-32 / ATCC BAA-453)</name>
    <dbReference type="NCBI Taxonomy" id="319224"/>
    <lineage>
        <taxon>Bacteria</taxon>
        <taxon>Pseudomonadati</taxon>
        <taxon>Pseudomonadota</taxon>
        <taxon>Gammaproteobacteria</taxon>
        <taxon>Alteromonadales</taxon>
        <taxon>Shewanellaceae</taxon>
        <taxon>Shewanella</taxon>
    </lineage>
</organism>
<sequence length="304" mass="33648">MWFKNLTLYRFNKPFVVETEALETALADFTFSPCSSQDISKFGFSNALGKKGSSLVHSANNRHLICVTKEEKMLPGQVIKEALEEKVALIEDEENRKLAKKEKDALKDEIITSLLPRAFSRRSQTRALILPELEMILVDSSSATKAEELLALLRKALGSLPVIPLSFKAPVESHLTEWLKNGSAPLPFEMQDEAELKSEADEGGIVRFKQQDLKEDEVLAHLATGKQVHKLALHFGQSIALLLQSDASVKRLKFSEEFRAGNDEVGTDDPMARLDADFALMGSELVALMHALVSALGGLEETQD</sequence>
<evidence type="ECO:0000255" key="1">
    <source>
        <dbReference type="HAMAP-Rule" id="MF_00194"/>
    </source>
</evidence>
<protein>
    <recommendedName>
        <fullName evidence="1">Recombination-associated protein RdgC</fullName>
    </recommendedName>
</protein>